<sequence>TVKXQLSMVLDLNKEIGGQTXTAA</sequence>
<accession>P83449</accession>
<keyword id="KW-0003">3Fe-4S</keyword>
<keyword id="KW-0004">4Fe-4S</keyword>
<keyword id="KW-0963">Cytoplasm</keyword>
<keyword id="KW-0903">Direct protein sequencing</keyword>
<keyword id="KW-0249">Electron transport</keyword>
<keyword id="KW-0408">Iron</keyword>
<keyword id="KW-0411">Iron-sulfur</keyword>
<keyword id="KW-0479">Metal-binding</keyword>
<keyword id="KW-0813">Transport</keyword>
<evidence type="ECO:0000250" key="1"/>
<evidence type="ECO:0000269" key="2">
    <source>
    </source>
</evidence>
<feature type="chain" id="PRO_0000089871" description="Chlorate reductase subunit beta">
    <location>
        <begin position="1"/>
        <end position="24" status="greater than"/>
    </location>
</feature>
<feature type="non-terminal residue">
    <location>
        <position position="24"/>
    </location>
</feature>
<organism>
    <name type="scientific">Stutzerimonas chloritidismutans</name>
    <name type="common">Pseudomonas chloritidismutans</name>
    <dbReference type="NCBI Taxonomy" id="203192"/>
    <lineage>
        <taxon>Bacteria</taxon>
        <taxon>Pseudomonadati</taxon>
        <taxon>Pseudomonadota</taxon>
        <taxon>Gammaproteobacteria</taxon>
        <taxon>Pseudomonadales</taxon>
        <taxon>Pseudomonadaceae</taxon>
        <taxon>Stutzerimonas</taxon>
    </lineage>
</organism>
<dbReference type="BRENDA" id="1.97.1.1">
    <property type="organism ID" value="7803"/>
</dbReference>
<dbReference type="GO" id="GO:0005737">
    <property type="term" value="C:cytoplasm"/>
    <property type="evidence" value="ECO:0007669"/>
    <property type="project" value="UniProtKB-SubCell"/>
</dbReference>
<dbReference type="GO" id="GO:0051538">
    <property type="term" value="F:3 iron, 4 sulfur cluster binding"/>
    <property type="evidence" value="ECO:0007669"/>
    <property type="project" value="UniProtKB-KW"/>
</dbReference>
<dbReference type="GO" id="GO:0051539">
    <property type="term" value="F:4 iron, 4 sulfur cluster binding"/>
    <property type="evidence" value="ECO:0007669"/>
    <property type="project" value="UniProtKB-KW"/>
</dbReference>
<dbReference type="GO" id="GO:0046872">
    <property type="term" value="F:metal ion binding"/>
    <property type="evidence" value="ECO:0007669"/>
    <property type="project" value="UniProtKB-KW"/>
</dbReference>
<reference key="1">
    <citation type="journal article" date="2003" name="J. Bacteriol.">
        <title>Characterization of the chlorate reductase from Pseudomonas chloritidismutans.</title>
        <authorList>
            <person name="Wolterink A.F.W.M."/>
            <person name="Schiltz E."/>
            <person name="Hagedoorn P.-L."/>
            <person name="Hagen W.R."/>
            <person name="Kengen S.W.M."/>
            <person name="Stams A.J.M."/>
        </authorList>
    </citation>
    <scope>PROTEIN SEQUENCE</scope>
    <scope>SUBUNIT</scope>
    <scope>SUBCELLULAR LOCATION</scope>
</reference>
<proteinExistence type="evidence at protein level"/>
<name>CLRB_STUCH</name>
<protein>
    <recommendedName>
        <fullName>Chlorate reductase subunit beta</fullName>
    </recommendedName>
    <alternativeName>
        <fullName>Chlorate reductase iron-sulfur subunit</fullName>
    </alternativeName>
</protein>
<comment type="function">
    <text evidence="1">Electron transfer subunit of the chlorate reductase.</text>
</comment>
<comment type="cofactor">
    <cofactor evidence="1">
        <name>[3Fe-4S] cluster</name>
        <dbReference type="ChEBI" id="CHEBI:21137"/>
    </cofactor>
    <text evidence="1">Binds 1 [3Fe-4S] cluster.</text>
</comment>
<comment type="cofactor">
    <cofactor evidence="1">
        <name>[4Fe-4S] cluster</name>
        <dbReference type="ChEBI" id="CHEBI:49883"/>
    </cofactor>
    <text evidence="1">Binds 3 [4Fe-4S] clusters.</text>
</comment>
<comment type="biophysicochemical properties">
    <kinetics>
        <KM>159 uM for chlorate</KM>
        <Vmax>51.0 umol/min/mg enzyme</Vmax>
    </kinetics>
    <phDependence>
        <text>Optimum pH is 7.5.</text>
    </phDependence>
</comment>
<comment type="subunit">
    <text evidence="2">Heterotrimer of alpha, beta and gamma subunits.</text>
</comment>
<comment type="subcellular location">
    <subcellularLocation>
        <location evidence="2">Cytoplasm</location>
    </subcellularLocation>
</comment>